<accession>Q88AK3</accession>
<feature type="chain" id="PRO_0000145990" description="Phosphoglycerate kinase">
    <location>
        <begin position="1"/>
        <end position="387"/>
    </location>
</feature>
<feature type="binding site" evidence="1">
    <location>
        <begin position="21"/>
        <end position="23"/>
    </location>
    <ligand>
        <name>substrate</name>
    </ligand>
</feature>
<feature type="binding site" evidence="1">
    <location>
        <position position="36"/>
    </location>
    <ligand>
        <name>substrate</name>
    </ligand>
</feature>
<feature type="binding site" evidence="1">
    <location>
        <begin position="59"/>
        <end position="62"/>
    </location>
    <ligand>
        <name>substrate</name>
    </ligand>
</feature>
<feature type="binding site" evidence="1">
    <location>
        <position position="113"/>
    </location>
    <ligand>
        <name>substrate</name>
    </ligand>
</feature>
<feature type="binding site" evidence="1">
    <location>
        <position position="146"/>
    </location>
    <ligand>
        <name>substrate</name>
    </ligand>
</feature>
<feature type="binding site" evidence="1">
    <location>
        <position position="197"/>
    </location>
    <ligand>
        <name>ATP</name>
        <dbReference type="ChEBI" id="CHEBI:30616"/>
    </ligand>
</feature>
<feature type="binding site" evidence="1">
    <location>
        <position position="314"/>
    </location>
    <ligand>
        <name>ATP</name>
        <dbReference type="ChEBI" id="CHEBI:30616"/>
    </ligand>
</feature>
<feature type="binding site" evidence="1">
    <location>
        <begin position="340"/>
        <end position="343"/>
    </location>
    <ligand>
        <name>ATP</name>
        <dbReference type="ChEBI" id="CHEBI:30616"/>
    </ligand>
</feature>
<keyword id="KW-0067">ATP-binding</keyword>
<keyword id="KW-0963">Cytoplasm</keyword>
<keyword id="KW-0324">Glycolysis</keyword>
<keyword id="KW-0418">Kinase</keyword>
<keyword id="KW-0547">Nucleotide-binding</keyword>
<keyword id="KW-1185">Reference proteome</keyword>
<keyword id="KW-0808">Transferase</keyword>
<proteinExistence type="inferred from homology"/>
<dbReference type="EC" id="2.7.2.3" evidence="1"/>
<dbReference type="EMBL" id="AE016853">
    <property type="protein sequence ID" value="AAO53931.1"/>
    <property type="molecule type" value="Genomic_DNA"/>
</dbReference>
<dbReference type="RefSeq" id="NP_790236.1">
    <property type="nucleotide sequence ID" value="NC_004578.1"/>
</dbReference>
<dbReference type="RefSeq" id="WP_005763560.1">
    <property type="nucleotide sequence ID" value="NC_004578.1"/>
</dbReference>
<dbReference type="SMR" id="Q88AK3"/>
<dbReference type="STRING" id="223283.PSPTO_0387"/>
<dbReference type="GeneID" id="1181996"/>
<dbReference type="KEGG" id="pst:PSPTO_0387"/>
<dbReference type="PATRIC" id="fig|223283.9.peg.404"/>
<dbReference type="eggNOG" id="COG0126">
    <property type="taxonomic scope" value="Bacteria"/>
</dbReference>
<dbReference type="HOGENOM" id="CLU_025427_0_2_6"/>
<dbReference type="OrthoDB" id="9808460at2"/>
<dbReference type="PhylomeDB" id="Q88AK3"/>
<dbReference type="UniPathway" id="UPA00109">
    <property type="reaction ID" value="UER00185"/>
</dbReference>
<dbReference type="Proteomes" id="UP000002515">
    <property type="component" value="Chromosome"/>
</dbReference>
<dbReference type="GO" id="GO:0005829">
    <property type="term" value="C:cytosol"/>
    <property type="evidence" value="ECO:0007669"/>
    <property type="project" value="TreeGrafter"/>
</dbReference>
<dbReference type="GO" id="GO:0043531">
    <property type="term" value="F:ADP binding"/>
    <property type="evidence" value="ECO:0007669"/>
    <property type="project" value="TreeGrafter"/>
</dbReference>
<dbReference type="GO" id="GO:0005524">
    <property type="term" value="F:ATP binding"/>
    <property type="evidence" value="ECO:0007669"/>
    <property type="project" value="UniProtKB-KW"/>
</dbReference>
<dbReference type="GO" id="GO:0004618">
    <property type="term" value="F:phosphoglycerate kinase activity"/>
    <property type="evidence" value="ECO:0007669"/>
    <property type="project" value="UniProtKB-UniRule"/>
</dbReference>
<dbReference type="GO" id="GO:0006094">
    <property type="term" value="P:gluconeogenesis"/>
    <property type="evidence" value="ECO:0007669"/>
    <property type="project" value="TreeGrafter"/>
</dbReference>
<dbReference type="GO" id="GO:0006096">
    <property type="term" value="P:glycolytic process"/>
    <property type="evidence" value="ECO:0007669"/>
    <property type="project" value="UniProtKB-UniRule"/>
</dbReference>
<dbReference type="FunFam" id="3.40.50.1260:FF:000001">
    <property type="entry name" value="Phosphoglycerate kinase"/>
    <property type="match status" value="1"/>
</dbReference>
<dbReference type="FunFam" id="3.40.50.1260:FF:000002">
    <property type="entry name" value="Phosphoglycerate kinase"/>
    <property type="match status" value="1"/>
</dbReference>
<dbReference type="Gene3D" id="3.40.50.1260">
    <property type="entry name" value="Phosphoglycerate kinase, N-terminal domain"/>
    <property type="match status" value="2"/>
</dbReference>
<dbReference type="HAMAP" id="MF_00145">
    <property type="entry name" value="Phosphoglyc_kinase"/>
    <property type="match status" value="1"/>
</dbReference>
<dbReference type="InterPro" id="IPR001576">
    <property type="entry name" value="Phosphoglycerate_kinase"/>
</dbReference>
<dbReference type="InterPro" id="IPR015911">
    <property type="entry name" value="Phosphoglycerate_kinase_CS"/>
</dbReference>
<dbReference type="InterPro" id="IPR015824">
    <property type="entry name" value="Phosphoglycerate_kinase_N"/>
</dbReference>
<dbReference type="InterPro" id="IPR036043">
    <property type="entry name" value="Phosphoglycerate_kinase_sf"/>
</dbReference>
<dbReference type="PANTHER" id="PTHR11406">
    <property type="entry name" value="PHOSPHOGLYCERATE KINASE"/>
    <property type="match status" value="1"/>
</dbReference>
<dbReference type="PANTHER" id="PTHR11406:SF23">
    <property type="entry name" value="PHOSPHOGLYCERATE KINASE 1, CHLOROPLASTIC-RELATED"/>
    <property type="match status" value="1"/>
</dbReference>
<dbReference type="Pfam" id="PF00162">
    <property type="entry name" value="PGK"/>
    <property type="match status" value="1"/>
</dbReference>
<dbReference type="PIRSF" id="PIRSF000724">
    <property type="entry name" value="Pgk"/>
    <property type="match status" value="1"/>
</dbReference>
<dbReference type="PRINTS" id="PR00477">
    <property type="entry name" value="PHGLYCKINASE"/>
</dbReference>
<dbReference type="SUPFAM" id="SSF53748">
    <property type="entry name" value="Phosphoglycerate kinase"/>
    <property type="match status" value="1"/>
</dbReference>
<dbReference type="PROSITE" id="PS00111">
    <property type="entry name" value="PGLYCERATE_KINASE"/>
    <property type="match status" value="1"/>
</dbReference>
<organism>
    <name type="scientific">Pseudomonas syringae pv. tomato (strain ATCC BAA-871 / DC3000)</name>
    <dbReference type="NCBI Taxonomy" id="223283"/>
    <lineage>
        <taxon>Bacteria</taxon>
        <taxon>Pseudomonadati</taxon>
        <taxon>Pseudomonadota</taxon>
        <taxon>Gammaproteobacteria</taxon>
        <taxon>Pseudomonadales</taxon>
        <taxon>Pseudomonadaceae</taxon>
        <taxon>Pseudomonas</taxon>
    </lineage>
</organism>
<protein>
    <recommendedName>
        <fullName evidence="1">Phosphoglycerate kinase</fullName>
        <ecNumber evidence="1">2.7.2.3</ecNumber>
    </recommendedName>
</protein>
<gene>
    <name evidence="1" type="primary">pgk</name>
    <name type="ordered locus">PSPTO_0387</name>
</gene>
<name>PGK_PSESM</name>
<comment type="catalytic activity">
    <reaction evidence="1">
        <text>(2R)-3-phosphoglycerate + ATP = (2R)-3-phospho-glyceroyl phosphate + ADP</text>
        <dbReference type="Rhea" id="RHEA:14801"/>
        <dbReference type="ChEBI" id="CHEBI:30616"/>
        <dbReference type="ChEBI" id="CHEBI:57604"/>
        <dbReference type="ChEBI" id="CHEBI:58272"/>
        <dbReference type="ChEBI" id="CHEBI:456216"/>
        <dbReference type="EC" id="2.7.2.3"/>
    </reaction>
</comment>
<comment type="pathway">
    <text evidence="1">Carbohydrate degradation; glycolysis; pyruvate from D-glyceraldehyde 3-phosphate: step 2/5.</text>
</comment>
<comment type="subunit">
    <text evidence="1">Monomer.</text>
</comment>
<comment type="subcellular location">
    <subcellularLocation>
        <location evidence="1">Cytoplasm</location>
    </subcellularLocation>
</comment>
<comment type="similarity">
    <text evidence="1">Belongs to the phosphoglycerate kinase family.</text>
</comment>
<evidence type="ECO:0000255" key="1">
    <source>
        <dbReference type="HAMAP-Rule" id="MF_00145"/>
    </source>
</evidence>
<reference key="1">
    <citation type="journal article" date="2003" name="Proc. Natl. Acad. Sci. U.S.A.">
        <title>The complete genome sequence of the Arabidopsis and tomato pathogen Pseudomonas syringae pv. tomato DC3000.</title>
        <authorList>
            <person name="Buell C.R."/>
            <person name="Joardar V."/>
            <person name="Lindeberg M."/>
            <person name="Selengut J."/>
            <person name="Paulsen I.T."/>
            <person name="Gwinn M.L."/>
            <person name="Dodson R.J."/>
            <person name="DeBoy R.T."/>
            <person name="Durkin A.S."/>
            <person name="Kolonay J.F."/>
            <person name="Madupu R."/>
            <person name="Daugherty S.C."/>
            <person name="Brinkac L.M."/>
            <person name="Beanan M.J."/>
            <person name="Haft D.H."/>
            <person name="Nelson W.C."/>
            <person name="Davidsen T.M."/>
            <person name="Zafar N."/>
            <person name="Zhou L."/>
            <person name="Liu J."/>
            <person name="Yuan Q."/>
            <person name="Khouri H.M."/>
            <person name="Fedorova N.B."/>
            <person name="Tran B."/>
            <person name="Russell D."/>
            <person name="Berry K.J."/>
            <person name="Utterback T.R."/>
            <person name="Van Aken S.E."/>
            <person name="Feldblyum T.V."/>
            <person name="D'Ascenzo M."/>
            <person name="Deng W.-L."/>
            <person name="Ramos A.R."/>
            <person name="Alfano J.R."/>
            <person name="Cartinhour S."/>
            <person name="Chatterjee A.K."/>
            <person name="Delaney T.P."/>
            <person name="Lazarowitz S.G."/>
            <person name="Martin G.B."/>
            <person name="Schneider D.J."/>
            <person name="Tang X."/>
            <person name="Bender C.L."/>
            <person name="White O."/>
            <person name="Fraser C.M."/>
            <person name="Collmer A."/>
        </authorList>
    </citation>
    <scope>NUCLEOTIDE SEQUENCE [LARGE SCALE GENOMIC DNA]</scope>
    <source>
        <strain>ATCC BAA-871 / DC3000</strain>
    </source>
</reference>
<sequence length="387" mass="40326">MTVLKMTDLDLQGKRVLIREDLNVPIKDGVVSSDARILASLPTIRLALEKGAAVMVCSHLGRPTEGEFSAENSLKPVAEYLSKALGRDVPLVADYLDGVDVKAGDIVLFENVRFNKGEKKNADELAQKYAALCDVFVMDAFGTAHRAEGSTHGVAKYAKVAAAGPLLAAELEALGKALGAPAQPMAAIVAGSKVSTKLDVLNSLSAICDQLIVGGGIANTFLAAAGHKVGKSLYEPDLLDTARAIAAKVSVPLPTDVVVAKEFAESATATVKLIADVADDDMILDIGPQTAAHFAELLKSSGTILWNGPVGVFEFDQFGEGTKTLAKAIAESKAFSIAGGGDTLAAIDKYGVADQISYISTGGGAFLEFVEGKVLPAVEMLEQRARA</sequence>